<proteinExistence type="inferred from homology"/>
<sequence>MSDITKQPANNISSDDKKEVAKASAKSSVEGAKRKTFYKSRSRKLCHFCAKGILKVDYKDVNTLRKNLNSYAKIVSRRQSGNCNLHQRHVSNAIKKARIMALLPFVKD</sequence>
<organism>
    <name type="scientific">Mycoplasmoides gallisepticum (strain R(low / passage 15 / clone 2))</name>
    <name type="common">Mycoplasma gallisepticum</name>
    <dbReference type="NCBI Taxonomy" id="710127"/>
    <lineage>
        <taxon>Bacteria</taxon>
        <taxon>Bacillati</taxon>
        <taxon>Mycoplasmatota</taxon>
        <taxon>Mycoplasmoidales</taxon>
        <taxon>Mycoplasmoidaceae</taxon>
        <taxon>Mycoplasmoides</taxon>
    </lineage>
</organism>
<comment type="function">
    <text evidence="1">Binds as a heterodimer with protein bS6 to the central domain of the 16S rRNA, where it helps stabilize the platform of the 30S subunit.</text>
</comment>
<comment type="subunit">
    <text evidence="1">Part of the 30S ribosomal subunit. Forms a tight heterodimer with protein bS6.</text>
</comment>
<comment type="similarity">
    <text evidence="1">Belongs to the bacterial ribosomal protein bS18 family.</text>
</comment>
<reference key="1">
    <citation type="journal article" date="2003" name="Microbiology">
        <title>The complete genome sequence of the avian pathogen Mycoplasma gallisepticum strain R(low).</title>
        <authorList>
            <person name="Papazisi L."/>
            <person name="Gorton T.S."/>
            <person name="Kutish G."/>
            <person name="Markham P.F."/>
            <person name="Browning G.F."/>
            <person name="Nguyen D.K."/>
            <person name="Swartzell S."/>
            <person name="Madan A."/>
            <person name="Mahairas G."/>
            <person name="Geary S.J."/>
        </authorList>
    </citation>
    <scope>NUCLEOTIDE SEQUENCE [LARGE SCALE GENOMIC DNA]</scope>
    <source>
        <strain>R(low / passage 15 / clone 2)</strain>
    </source>
</reference>
<evidence type="ECO:0000255" key="1">
    <source>
        <dbReference type="HAMAP-Rule" id="MF_00270"/>
    </source>
</evidence>
<evidence type="ECO:0000256" key="2">
    <source>
        <dbReference type="SAM" id="MobiDB-lite"/>
    </source>
</evidence>
<evidence type="ECO:0000305" key="3"/>
<keyword id="KW-1185">Reference proteome</keyword>
<keyword id="KW-0687">Ribonucleoprotein</keyword>
<keyword id="KW-0689">Ribosomal protein</keyword>
<keyword id="KW-0694">RNA-binding</keyword>
<keyword id="KW-0699">rRNA-binding</keyword>
<feature type="chain" id="PRO_0000111179" description="Small ribosomal subunit protein bS18">
    <location>
        <begin position="1"/>
        <end position="108"/>
    </location>
</feature>
<feature type="region of interest" description="Disordered" evidence="2">
    <location>
        <begin position="1"/>
        <end position="33"/>
    </location>
</feature>
<feature type="compositionally biased region" description="Polar residues" evidence="2">
    <location>
        <begin position="1"/>
        <end position="12"/>
    </location>
</feature>
<accession>Q7NAM3</accession>
<gene>
    <name evidence="1" type="primary">rpsR</name>
    <name evidence="1" type="synonym">rps18</name>
    <name type="ordered locus">MYCGA6130</name>
    <name type="ORF">MGA_0421</name>
</gene>
<dbReference type="EMBL" id="AE015450">
    <property type="protein sequence ID" value="AAP56963.1"/>
    <property type="molecule type" value="Genomic_DNA"/>
</dbReference>
<dbReference type="RefSeq" id="WP_011113872.1">
    <property type="nucleotide sequence ID" value="NC_004829.2"/>
</dbReference>
<dbReference type="SMR" id="Q7NAM3"/>
<dbReference type="GeneID" id="93510449"/>
<dbReference type="KEGG" id="mga:MGA_0421"/>
<dbReference type="HOGENOM" id="CLU_148710_0_3_14"/>
<dbReference type="OrthoDB" id="9812008at2"/>
<dbReference type="Proteomes" id="UP000001418">
    <property type="component" value="Chromosome"/>
</dbReference>
<dbReference type="GO" id="GO:0022627">
    <property type="term" value="C:cytosolic small ribosomal subunit"/>
    <property type="evidence" value="ECO:0007669"/>
    <property type="project" value="TreeGrafter"/>
</dbReference>
<dbReference type="GO" id="GO:0070181">
    <property type="term" value="F:small ribosomal subunit rRNA binding"/>
    <property type="evidence" value="ECO:0007669"/>
    <property type="project" value="TreeGrafter"/>
</dbReference>
<dbReference type="GO" id="GO:0003735">
    <property type="term" value="F:structural constituent of ribosome"/>
    <property type="evidence" value="ECO:0007669"/>
    <property type="project" value="InterPro"/>
</dbReference>
<dbReference type="GO" id="GO:0006412">
    <property type="term" value="P:translation"/>
    <property type="evidence" value="ECO:0007669"/>
    <property type="project" value="UniProtKB-UniRule"/>
</dbReference>
<dbReference type="Gene3D" id="4.10.640.10">
    <property type="entry name" value="Ribosomal protein S18"/>
    <property type="match status" value="1"/>
</dbReference>
<dbReference type="HAMAP" id="MF_00270">
    <property type="entry name" value="Ribosomal_bS18"/>
    <property type="match status" value="1"/>
</dbReference>
<dbReference type="InterPro" id="IPR001648">
    <property type="entry name" value="Ribosomal_bS18"/>
</dbReference>
<dbReference type="InterPro" id="IPR036870">
    <property type="entry name" value="Ribosomal_bS18_sf"/>
</dbReference>
<dbReference type="NCBIfam" id="TIGR00165">
    <property type="entry name" value="S18"/>
    <property type="match status" value="1"/>
</dbReference>
<dbReference type="PANTHER" id="PTHR13479">
    <property type="entry name" value="30S RIBOSOMAL PROTEIN S18"/>
    <property type="match status" value="1"/>
</dbReference>
<dbReference type="PANTHER" id="PTHR13479:SF40">
    <property type="entry name" value="SMALL RIBOSOMAL SUBUNIT PROTEIN BS18M"/>
    <property type="match status" value="1"/>
</dbReference>
<dbReference type="Pfam" id="PF01084">
    <property type="entry name" value="Ribosomal_S18"/>
    <property type="match status" value="1"/>
</dbReference>
<dbReference type="PRINTS" id="PR00974">
    <property type="entry name" value="RIBOSOMALS18"/>
</dbReference>
<dbReference type="SUPFAM" id="SSF46911">
    <property type="entry name" value="Ribosomal protein S18"/>
    <property type="match status" value="1"/>
</dbReference>
<protein>
    <recommendedName>
        <fullName evidence="1">Small ribosomal subunit protein bS18</fullName>
    </recommendedName>
    <alternativeName>
        <fullName evidence="3">30S ribosomal protein S18</fullName>
    </alternativeName>
</protein>
<name>RS18_MYCGA</name>